<name>OGT_MYCBO</name>
<accession>P0A697</accession>
<accession>A0A1R3XY02</accession>
<accession>Q10627</accession>
<accession>X2BHK8</accession>
<proteinExistence type="inferred from homology"/>
<feature type="chain" id="PRO_0000139370" description="Methylated-DNA--protein-cysteine methyltransferase">
    <location>
        <begin position="1"/>
        <end position="165"/>
    </location>
</feature>
<feature type="active site" description="Nucleophile; methyl group acceptor" evidence="1">
    <location>
        <position position="126"/>
    </location>
</feature>
<gene>
    <name evidence="1" type="primary">ogt</name>
    <name type="ordered locus">BQ2027_MB1349C</name>
</gene>
<comment type="function">
    <text evidence="1">Involved in the cellular defense against the biological effects of O6-methylguanine (O6-MeG) and O4-methylthymine (O4-MeT) in DNA. Repairs the methylated nucleobase in DNA by stoichiometrically transferring the methyl group to a cysteine residue in the enzyme. This is a suicide reaction: the enzyme is irreversibly inactivated.</text>
</comment>
<comment type="catalytic activity">
    <reaction evidence="1">
        <text>a 6-O-methyl-2'-deoxyguanosine in DNA + L-cysteinyl-[protein] = S-methyl-L-cysteinyl-[protein] + a 2'-deoxyguanosine in DNA</text>
        <dbReference type="Rhea" id="RHEA:24000"/>
        <dbReference type="Rhea" id="RHEA-COMP:10131"/>
        <dbReference type="Rhea" id="RHEA-COMP:10132"/>
        <dbReference type="Rhea" id="RHEA-COMP:11367"/>
        <dbReference type="Rhea" id="RHEA-COMP:11368"/>
        <dbReference type="ChEBI" id="CHEBI:29950"/>
        <dbReference type="ChEBI" id="CHEBI:82612"/>
        <dbReference type="ChEBI" id="CHEBI:85445"/>
        <dbReference type="ChEBI" id="CHEBI:85448"/>
        <dbReference type="EC" id="2.1.1.63"/>
    </reaction>
</comment>
<comment type="catalytic activity">
    <reaction evidence="1">
        <text>a 4-O-methyl-thymidine in DNA + L-cysteinyl-[protein] = a thymidine in DNA + S-methyl-L-cysteinyl-[protein]</text>
        <dbReference type="Rhea" id="RHEA:53428"/>
        <dbReference type="Rhea" id="RHEA-COMP:10131"/>
        <dbReference type="Rhea" id="RHEA-COMP:10132"/>
        <dbReference type="Rhea" id="RHEA-COMP:13555"/>
        <dbReference type="Rhea" id="RHEA-COMP:13556"/>
        <dbReference type="ChEBI" id="CHEBI:29950"/>
        <dbReference type="ChEBI" id="CHEBI:82612"/>
        <dbReference type="ChEBI" id="CHEBI:137386"/>
        <dbReference type="ChEBI" id="CHEBI:137387"/>
        <dbReference type="EC" id="2.1.1.63"/>
    </reaction>
</comment>
<comment type="subcellular location">
    <subcellularLocation>
        <location evidence="1">Cytoplasm</location>
    </subcellularLocation>
</comment>
<comment type="miscellaneous">
    <text>This enzyme catalyzes only one turnover and therefore is not strictly catalytic. According to one definition, an enzyme is a biocatalyst that acts repeatedly and over many reaction cycles.</text>
</comment>
<comment type="similarity">
    <text evidence="1">Belongs to the MGMT family.</text>
</comment>
<protein>
    <recommendedName>
        <fullName evidence="1">Methylated-DNA--protein-cysteine methyltransferase</fullName>
        <ecNumber evidence="1">2.1.1.63</ecNumber>
    </recommendedName>
    <alternativeName>
        <fullName evidence="1">6-O-methylguanine-DNA methyltransferase</fullName>
        <shortName evidence="1">MGMT</shortName>
    </alternativeName>
    <alternativeName>
        <fullName evidence="1">O-6-methylguanine-DNA-alkyltransferase</fullName>
    </alternativeName>
</protein>
<sequence length="165" mass="17858">MIHYRTIDSPIGPLTLAGHGSVLTNLRMLEQTYEPSRTHWTPDPGAFSGAVDQLNAYFAGELTEFDVELDLRGTDFQQRVWKALLTIPYGETRSYGEIADQIGAPGAARAVGLANGHNPIAIIVPCHRVIGASGKLTGYGGGINRKRALLELEKSRAPADLTLFD</sequence>
<keyword id="KW-0963">Cytoplasm</keyword>
<keyword id="KW-0227">DNA damage</keyword>
<keyword id="KW-0234">DNA repair</keyword>
<keyword id="KW-0489">Methyltransferase</keyword>
<keyword id="KW-1185">Reference proteome</keyword>
<keyword id="KW-0808">Transferase</keyword>
<evidence type="ECO:0000255" key="1">
    <source>
        <dbReference type="HAMAP-Rule" id="MF_00772"/>
    </source>
</evidence>
<organism>
    <name type="scientific">Mycobacterium bovis (strain ATCC BAA-935 / AF2122/97)</name>
    <dbReference type="NCBI Taxonomy" id="233413"/>
    <lineage>
        <taxon>Bacteria</taxon>
        <taxon>Bacillati</taxon>
        <taxon>Actinomycetota</taxon>
        <taxon>Actinomycetes</taxon>
        <taxon>Mycobacteriales</taxon>
        <taxon>Mycobacteriaceae</taxon>
        <taxon>Mycobacterium</taxon>
        <taxon>Mycobacterium tuberculosis complex</taxon>
    </lineage>
</organism>
<dbReference type="EC" id="2.1.1.63" evidence="1"/>
<dbReference type="EMBL" id="LT708304">
    <property type="protein sequence ID" value="SIT99952.1"/>
    <property type="molecule type" value="Genomic_DNA"/>
</dbReference>
<dbReference type="RefSeq" id="NP_855003.1">
    <property type="nucleotide sequence ID" value="NC_002945.3"/>
</dbReference>
<dbReference type="RefSeq" id="WP_003406857.1">
    <property type="nucleotide sequence ID" value="NC_002945.4"/>
</dbReference>
<dbReference type="SMR" id="P0A697"/>
<dbReference type="GeneID" id="45425292"/>
<dbReference type="KEGG" id="mbo:BQ2027_MB1349C"/>
<dbReference type="PATRIC" id="fig|233413.5.peg.1479"/>
<dbReference type="Proteomes" id="UP000001419">
    <property type="component" value="Chromosome"/>
</dbReference>
<dbReference type="GO" id="GO:0005737">
    <property type="term" value="C:cytoplasm"/>
    <property type="evidence" value="ECO:0007669"/>
    <property type="project" value="UniProtKB-SubCell"/>
</dbReference>
<dbReference type="GO" id="GO:0003908">
    <property type="term" value="F:methylated-DNA-[protein]-cysteine S-methyltransferase activity"/>
    <property type="evidence" value="ECO:0007669"/>
    <property type="project" value="UniProtKB-UniRule"/>
</dbReference>
<dbReference type="GO" id="GO:0006307">
    <property type="term" value="P:DNA alkylation repair"/>
    <property type="evidence" value="ECO:0007669"/>
    <property type="project" value="UniProtKB-UniRule"/>
</dbReference>
<dbReference type="GO" id="GO:0032259">
    <property type="term" value="P:methylation"/>
    <property type="evidence" value="ECO:0007669"/>
    <property type="project" value="UniProtKB-KW"/>
</dbReference>
<dbReference type="CDD" id="cd06445">
    <property type="entry name" value="ATase"/>
    <property type="match status" value="1"/>
</dbReference>
<dbReference type="FunFam" id="1.10.10.10:FF:000214">
    <property type="entry name" value="Methylated-DNA--protein-cysteine methyltransferase"/>
    <property type="match status" value="1"/>
</dbReference>
<dbReference type="Gene3D" id="3.30.160.70">
    <property type="entry name" value="Methylated DNA-protein cysteine methyltransferase domain"/>
    <property type="match status" value="1"/>
</dbReference>
<dbReference type="Gene3D" id="1.10.10.10">
    <property type="entry name" value="Winged helix-like DNA-binding domain superfamily/Winged helix DNA-binding domain"/>
    <property type="match status" value="1"/>
</dbReference>
<dbReference type="HAMAP" id="MF_00772">
    <property type="entry name" value="OGT"/>
    <property type="match status" value="1"/>
</dbReference>
<dbReference type="InterPro" id="IPR001497">
    <property type="entry name" value="MethylDNA_cys_MeTrfase_AS"/>
</dbReference>
<dbReference type="InterPro" id="IPR014048">
    <property type="entry name" value="MethylDNA_cys_MeTrfase_DNA-bd"/>
</dbReference>
<dbReference type="InterPro" id="IPR036217">
    <property type="entry name" value="MethylDNA_cys_MeTrfase_DNAb"/>
</dbReference>
<dbReference type="InterPro" id="IPR008332">
    <property type="entry name" value="MethylG_MeTrfase_N"/>
</dbReference>
<dbReference type="InterPro" id="IPR023546">
    <property type="entry name" value="MGMT"/>
</dbReference>
<dbReference type="InterPro" id="IPR036631">
    <property type="entry name" value="MGMT_N_sf"/>
</dbReference>
<dbReference type="InterPro" id="IPR036388">
    <property type="entry name" value="WH-like_DNA-bd_sf"/>
</dbReference>
<dbReference type="NCBIfam" id="TIGR00589">
    <property type="entry name" value="ogt"/>
    <property type="match status" value="1"/>
</dbReference>
<dbReference type="PANTHER" id="PTHR10815">
    <property type="entry name" value="METHYLATED-DNA--PROTEIN-CYSTEINE METHYLTRANSFERASE"/>
    <property type="match status" value="1"/>
</dbReference>
<dbReference type="PANTHER" id="PTHR10815:SF5">
    <property type="entry name" value="METHYLATED-DNA--PROTEIN-CYSTEINE METHYLTRANSFERASE"/>
    <property type="match status" value="1"/>
</dbReference>
<dbReference type="Pfam" id="PF01035">
    <property type="entry name" value="DNA_binding_1"/>
    <property type="match status" value="1"/>
</dbReference>
<dbReference type="Pfam" id="PF02870">
    <property type="entry name" value="Methyltransf_1N"/>
    <property type="match status" value="1"/>
</dbReference>
<dbReference type="SUPFAM" id="SSF53155">
    <property type="entry name" value="Methylated DNA-protein cysteine methyltransferase domain"/>
    <property type="match status" value="1"/>
</dbReference>
<dbReference type="SUPFAM" id="SSF46767">
    <property type="entry name" value="Methylated DNA-protein cysteine methyltransferase, C-terminal domain"/>
    <property type="match status" value="1"/>
</dbReference>
<dbReference type="PROSITE" id="PS00374">
    <property type="entry name" value="MGMT"/>
    <property type="match status" value="1"/>
</dbReference>
<reference key="1">
    <citation type="journal article" date="2003" name="Proc. Natl. Acad. Sci. U.S.A.">
        <title>The complete genome sequence of Mycobacterium bovis.</title>
        <authorList>
            <person name="Garnier T."/>
            <person name="Eiglmeier K."/>
            <person name="Camus J.-C."/>
            <person name="Medina N."/>
            <person name="Mansoor H."/>
            <person name="Pryor M."/>
            <person name="Duthoy S."/>
            <person name="Grondin S."/>
            <person name="Lacroix C."/>
            <person name="Monsempe C."/>
            <person name="Simon S."/>
            <person name="Harris B."/>
            <person name="Atkin R."/>
            <person name="Doggett J."/>
            <person name="Mayes R."/>
            <person name="Keating L."/>
            <person name="Wheeler P.R."/>
            <person name="Parkhill J."/>
            <person name="Barrell B.G."/>
            <person name="Cole S.T."/>
            <person name="Gordon S.V."/>
            <person name="Hewinson R.G."/>
        </authorList>
    </citation>
    <scope>NUCLEOTIDE SEQUENCE [LARGE SCALE GENOMIC DNA]</scope>
    <source>
        <strain>ATCC BAA-935 / AF2122/97</strain>
    </source>
</reference>
<reference key="2">
    <citation type="journal article" date="2017" name="Genome Announc.">
        <title>Updated reference genome sequence and annotation of Mycobacterium bovis AF2122/97.</title>
        <authorList>
            <person name="Malone K.M."/>
            <person name="Farrell D."/>
            <person name="Stuber T.P."/>
            <person name="Schubert O.T."/>
            <person name="Aebersold R."/>
            <person name="Robbe-Austerman S."/>
            <person name="Gordon S.V."/>
        </authorList>
    </citation>
    <scope>NUCLEOTIDE SEQUENCE [LARGE SCALE GENOMIC DNA]</scope>
    <scope>GENOME REANNOTATION</scope>
    <source>
        <strain>ATCC BAA-935 / AF2122/97</strain>
    </source>
</reference>